<feature type="chain" id="PRO_0000439922" description="Cyanuric acid amidohydrolase">
    <location>
        <begin position="1"/>
        <end position="341"/>
    </location>
</feature>
<feature type="region of interest" description="RU A" evidence="2">
    <location>
        <begin position="1"/>
        <end position="90"/>
    </location>
</feature>
<feature type="region of interest" description="RU B" evidence="2">
    <location>
        <begin position="95"/>
        <end position="229"/>
    </location>
</feature>
<feature type="region of interest" description="RU C" evidence="2">
    <location>
        <begin position="235"/>
        <end position="341"/>
    </location>
</feature>
<feature type="active site" evidence="2">
    <location>
        <position position="144"/>
    </location>
</feature>
<feature type="active site" description="Nucleophile" evidence="2">
    <location>
        <position position="212"/>
    </location>
</feature>
<feature type="binding site" evidence="2">
    <location>
        <position position="51"/>
    </location>
    <ligand>
        <name>substrate</name>
    </ligand>
</feature>
<feature type="binding site" evidence="2">
    <location>
        <begin position="71"/>
        <end position="72"/>
    </location>
    <ligand>
        <name>substrate</name>
    </ligand>
</feature>
<feature type="binding site" evidence="2">
    <location>
        <position position="176"/>
    </location>
    <ligand>
        <name>substrate</name>
    </ligand>
</feature>
<feature type="binding site" evidence="2">
    <location>
        <begin position="212"/>
        <end position="213"/>
    </location>
    <ligand>
        <name>substrate</name>
    </ligand>
</feature>
<feature type="binding site" evidence="2">
    <location>
        <position position="273"/>
    </location>
    <ligand>
        <name>Mg(2+)</name>
        <dbReference type="ChEBI" id="CHEBI:18420"/>
        <note>structural</note>
    </ligand>
</feature>
<feature type="binding site" evidence="2">
    <location>
        <position position="300"/>
    </location>
    <ligand>
        <name>substrate</name>
    </ligand>
</feature>
<feature type="binding site" evidence="2">
    <location>
        <begin position="319"/>
        <end position="320"/>
    </location>
    <ligand>
        <name>substrate</name>
    </ligand>
</feature>
<feature type="binding site" evidence="2">
    <location>
        <position position="322"/>
    </location>
    <ligand>
        <name>Mg(2+)</name>
        <dbReference type="ChEBI" id="CHEBI:18420"/>
        <note>structural</note>
    </ligand>
</feature>
<feature type="binding site" evidence="2">
    <location>
        <position position="325"/>
    </location>
    <ligand>
        <name>Mg(2+)</name>
        <dbReference type="ChEBI" id="CHEBI:18420"/>
        <note>structural</note>
    </ligand>
</feature>
<feature type="binding site" evidence="2">
    <location>
        <position position="326"/>
    </location>
    <ligand>
        <name>Mg(2+)</name>
        <dbReference type="ChEBI" id="CHEBI:18420"/>
        <note>structural</note>
    </ligand>
</feature>
<feature type="binding site" evidence="2">
    <location>
        <position position="327"/>
    </location>
    <ligand>
        <name>Mg(2+)</name>
        <dbReference type="ChEBI" id="CHEBI:18420"/>
        <note>structural</note>
    </ligand>
</feature>
<feature type="binding site" evidence="2">
    <location>
        <position position="330"/>
    </location>
    <ligand>
        <name>Mg(2+)</name>
        <dbReference type="ChEBI" id="CHEBI:18420"/>
        <note>structural</note>
    </ligand>
</feature>
<feature type="site" description="Important for substrate specificity" evidence="2">
    <location>
        <position position="296"/>
    </location>
</feature>
<keyword id="KW-0903">Direct protein sequencing</keyword>
<keyword id="KW-0378">Hydrolase</keyword>
<keyword id="KW-0460">Magnesium</keyword>
<keyword id="KW-0479">Metal-binding</keyword>
<protein>
    <recommendedName>
        <fullName evidence="2">Cyanuric acid amidohydrolase</fullName>
        <shortName evidence="2">CAH</shortName>
        <ecNumber evidence="2 3">3.5.2.15</ecNumber>
    </recommendedName>
    <alternativeName>
        <fullName evidence="4">Cyanuric acid hydrolase</fullName>
    </alternativeName>
</protein>
<reference key="1">
    <citation type="journal article" date="2013" name="J. Bacteriol.">
        <title>Expanding the cyanuric acid hydrolase protein family to the fungal kingdom.</title>
        <authorList>
            <person name="Dodge A.G."/>
            <person name="Preiner C.S."/>
            <person name="Wackett L.P."/>
        </authorList>
    </citation>
    <scope>NUCLEOTIDE SEQUENCE [GENOMIC DNA]</scope>
    <scope>PROTEIN SEQUENCE OF 162-174</scope>
    <scope>FUNCTION</scope>
    <scope>CATALYTIC ACTIVITY</scope>
    <scope>ACTIVITY REGULATION</scope>
    <scope>BIOPHYSICOCHEMICAL PROPERTIES</scope>
    <source>
        <strain>CA</strain>
    </source>
</reference>
<organism>
    <name type="scientific">Sarocladium sp</name>
    <dbReference type="NCBI Taxonomy" id="1707703"/>
    <lineage>
        <taxon>Eukaryota</taxon>
        <taxon>Fungi</taxon>
        <taxon>Dikarya</taxon>
        <taxon>Ascomycota</taxon>
        <taxon>Pezizomycotina</taxon>
        <taxon>Sordariomycetes</taxon>
        <taxon>Hypocreomycetidae</taxon>
        <taxon>Hypocreales</taxon>
        <taxon>Sarocladiaceae</taxon>
        <taxon>Sarocladium</taxon>
    </lineage>
</organism>
<proteinExistence type="evidence at protein level"/>
<accession>U3N9N6</accession>
<evidence type="ECO:0000250" key="1">
    <source>
        <dbReference type="UniProtKB" id="P58329"/>
    </source>
</evidence>
<evidence type="ECO:0000255" key="2">
    <source>
        <dbReference type="HAMAP-Rule" id="MF_01989"/>
    </source>
</evidence>
<evidence type="ECO:0000269" key="3">
    <source>
    </source>
</evidence>
<evidence type="ECO:0000303" key="4">
    <source>
    </source>
</evidence>
<evidence type="ECO:0000305" key="5"/>
<name>CAH_SARSX</name>
<dbReference type="EC" id="3.5.2.15" evidence="2 3"/>
<dbReference type="EMBL" id="KF537246">
    <property type="protein sequence ID" value="AGW27430.1"/>
    <property type="molecule type" value="Genomic_DNA"/>
</dbReference>
<dbReference type="SMR" id="U3N9N6"/>
<dbReference type="UniPathway" id="UPA00008">
    <property type="reaction ID" value="UER00502"/>
</dbReference>
<dbReference type="GO" id="GO:0018753">
    <property type="term" value="F:cyanuric acid amidohydrolase activity"/>
    <property type="evidence" value="ECO:0007669"/>
    <property type="project" value="UniProtKB-UniRule"/>
</dbReference>
<dbReference type="GO" id="GO:0046872">
    <property type="term" value="F:metal ion binding"/>
    <property type="evidence" value="ECO:0007669"/>
    <property type="project" value="UniProtKB-UniRule"/>
</dbReference>
<dbReference type="GO" id="GO:0019381">
    <property type="term" value="P:atrazine catabolic process"/>
    <property type="evidence" value="ECO:0007669"/>
    <property type="project" value="UniProtKB-UniRule"/>
</dbReference>
<dbReference type="Gene3D" id="3.30.1330.160">
    <property type="entry name" value="Cyanuric acid hydrolase/Barbituras, RU C"/>
    <property type="match status" value="1"/>
</dbReference>
<dbReference type="Gene3D" id="3.30.1330.170">
    <property type="entry name" value="Cyanuric acid hydrolase/Barbiturase, RU A"/>
    <property type="match status" value="1"/>
</dbReference>
<dbReference type="Gene3D" id="3.30.1330.180">
    <property type="entry name" value="Cyanuric acid hydrolase/Barbiturase, RU B"/>
    <property type="match status" value="1"/>
</dbReference>
<dbReference type="HAMAP" id="MF_01989">
    <property type="entry name" value="Cyc_amidohydrol"/>
    <property type="match status" value="1"/>
</dbReference>
<dbReference type="InterPro" id="IPR014086">
    <property type="entry name" value="AtzD/Barbiturase"/>
</dbReference>
<dbReference type="InterPro" id="IPR043008">
    <property type="entry name" value="AtzD/Barbiturase_RUA"/>
</dbReference>
<dbReference type="InterPro" id="IPR043006">
    <property type="entry name" value="AtzD/Barbiturase_RUB"/>
</dbReference>
<dbReference type="InterPro" id="IPR043007">
    <property type="entry name" value="AtzD/Barbiturase_RUC"/>
</dbReference>
<dbReference type="NCBIfam" id="TIGR02714">
    <property type="entry name" value="amido_AtzD_TrzD"/>
    <property type="match status" value="1"/>
</dbReference>
<dbReference type="Pfam" id="PF09663">
    <property type="entry name" value="Amido_AtzD_TrzD"/>
    <property type="match status" value="1"/>
</dbReference>
<comment type="function">
    <text evidence="2 3">Responsible for the hydrolysis of cyanuric acid, an intermediate formed during catabolism of s-triazine based compounds in herbicides such as atrazine and polymers such as melamine. Catalyzes the hydrolytic opening of the s-triazine ring of cyanuric acid (2,4,6-trihydroxy-s-triazine) to yield carbon dioxide and carboxybiuret, which spontaneously decarboxylates to biuret. Only active on cyanuric acid and N-methylisocyanuric acid.</text>
</comment>
<comment type="catalytic activity">
    <reaction evidence="2 3">
        <text>cyanurate + H2O = 1-carboxybiuret + H(+)</text>
        <dbReference type="Rhea" id="RHEA:70363"/>
        <dbReference type="ChEBI" id="CHEBI:15377"/>
        <dbReference type="ChEBI" id="CHEBI:15378"/>
        <dbReference type="ChEBI" id="CHEBI:38028"/>
        <dbReference type="ChEBI" id="CHEBI:142864"/>
        <dbReference type="EC" id="3.5.2.15"/>
    </reaction>
</comment>
<comment type="activity regulation">
    <text evidence="2 3">Inhibited by barbituric acid.</text>
</comment>
<comment type="biophysicochemical properties">
    <kinetics>
        <KM evidence="3">400 uM for cyanuric acid</KM>
        <text evidence="3">kcat is 3.4 sec(-1) with cyanuric acid as substrate.</text>
    </kinetics>
</comment>
<comment type="pathway">
    <text evidence="2">Xenobiotic degradation; atrazine degradation; biuret from cyanurate: step 1/1.</text>
</comment>
<comment type="subunit">
    <text evidence="1 2">Homotetramer.</text>
</comment>
<comment type="domain">
    <text evidence="2">The monomer structure is formed from three repeating units (RUs) that share the same structure as one another. The monomer, the active site and substrate all possess threefold rotational symmetry, to the extent that the active site possesses three potential Ser-Lys catalytic dyads. It is possible that any or all of the three active-site serines may act as nucleophile (albeit only one can do so per catalytic cycle).</text>
</comment>
<comment type="similarity">
    <text evidence="2 5">Belongs to the cyclic amide hydrolase (CyAH) family.</text>
</comment>
<sequence>MAPIEILKFPISSPGDISPLKKLQDAGYDPSNILAVVGKTEGNGCVNDFSRTLASAVWEPRIPSDAVTIFSGGTEGVLSPHVTFFLRSPGDKETGLSAAVGHTRRFEPHEIGTDEQAQQVATTTSSLIEQMGVTPDQVHMVLIKCPLLTSEKLETIRALGRVPVTTDTYESMARSRYASAVGIAAAVGEIQHTRIPEAVSKAGTWSAKASCSSGAELEDCHILVLASTSAQGSRLHAVSRPMADAMDAASILALMELAKKDGGKIVQVFAKAEADPSGHVREWRHTMNTDSDIHSTRHARAAVGGLIAGLVSDAEIYVSGGAEGQGPSGGGSLCLVYETSI</sequence>